<proteinExistence type="inferred from homology"/>
<name>CINAL_SYNE7</name>
<dbReference type="EMBL" id="CP000100">
    <property type="protein sequence ID" value="ABB56312.1"/>
    <property type="molecule type" value="Genomic_DNA"/>
</dbReference>
<dbReference type="RefSeq" id="WP_011377519.1">
    <property type="nucleotide sequence ID" value="NZ_JACJTX010000002.1"/>
</dbReference>
<dbReference type="SMR" id="Q31RK7"/>
<dbReference type="STRING" id="1140.Synpcc7942_0280"/>
<dbReference type="PaxDb" id="1140-Synpcc7942_0280"/>
<dbReference type="KEGG" id="syf:Synpcc7942_0280"/>
<dbReference type="eggNOG" id="COG1058">
    <property type="taxonomic scope" value="Bacteria"/>
</dbReference>
<dbReference type="eggNOG" id="COG1546">
    <property type="taxonomic scope" value="Bacteria"/>
</dbReference>
<dbReference type="HOGENOM" id="CLU_030805_9_3_3"/>
<dbReference type="OrthoDB" id="9801454at2"/>
<dbReference type="BioCyc" id="SYNEL:SYNPCC7942_0280-MONOMER"/>
<dbReference type="Proteomes" id="UP000889800">
    <property type="component" value="Chromosome"/>
</dbReference>
<dbReference type="CDD" id="cd00885">
    <property type="entry name" value="cinA"/>
    <property type="match status" value="1"/>
</dbReference>
<dbReference type="Gene3D" id="3.30.70.2860">
    <property type="match status" value="1"/>
</dbReference>
<dbReference type="Gene3D" id="3.90.950.20">
    <property type="entry name" value="CinA-like"/>
    <property type="match status" value="1"/>
</dbReference>
<dbReference type="Gene3D" id="3.40.980.10">
    <property type="entry name" value="MoaB/Mog-like domain"/>
    <property type="match status" value="1"/>
</dbReference>
<dbReference type="HAMAP" id="MF_00226_B">
    <property type="entry name" value="CinA_B"/>
    <property type="match status" value="1"/>
</dbReference>
<dbReference type="InterPro" id="IPR050101">
    <property type="entry name" value="CinA"/>
</dbReference>
<dbReference type="InterPro" id="IPR036653">
    <property type="entry name" value="CinA-like_C"/>
</dbReference>
<dbReference type="InterPro" id="IPR008136">
    <property type="entry name" value="CinA_C"/>
</dbReference>
<dbReference type="InterPro" id="IPR041424">
    <property type="entry name" value="CinA_KH"/>
</dbReference>
<dbReference type="InterPro" id="IPR008135">
    <property type="entry name" value="Competence-induced_CinA"/>
</dbReference>
<dbReference type="InterPro" id="IPR036425">
    <property type="entry name" value="MoaB/Mog-like_dom_sf"/>
</dbReference>
<dbReference type="InterPro" id="IPR001453">
    <property type="entry name" value="MoaB/Mog_dom"/>
</dbReference>
<dbReference type="NCBIfam" id="TIGR00200">
    <property type="entry name" value="cinA_nterm"/>
    <property type="match status" value="1"/>
</dbReference>
<dbReference type="NCBIfam" id="TIGR00199">
    <property type="entry name" value="PncC_domain"/>
    <property type="match status" value="1"/>
</dbReference>
<dbReference type="NCBIfam" id="NF001813">
    <property type="entry name" value="PRK00549.1"/>
    <property type="match status" value="1"/>
</dbReference>
<dbReference type="PANTHER" id="PTHR13939">
    <property type="entry name" value="NICOTINAMIDE-NUCLEOTIDE AMIDOHYDROLASE PNCC"/>
    <property type="match status" value="1"/>
</dbReference>
<dbReference type="PANTHER" id="PTHR13939:SF0">
    <property type="entry name" value="NMN AMIDOHYDROLASE-LIKE PROTEIN YFAY"/>
    <property type="match status" value="1"/>
</dbReference>
<dbReference type="Pfam" id="PF02464">
    <property type="entry name" value="CinA"/>
    <property type="match status" value="1"/>
</dbReference>
<dbReference type="Pfam" id="PF18146">
    <property type="entry name" value="CinA_KH"/>
    <property type="match status" value="1"/>
</dbReference>
<dbReference type="Pfam" id="PF00994">
    <property type="entry name" value="MoCF_biosynth"/>
    <property type="match status" value="1"/>
</dbReference>
<dbReference type="PIRSF" id="PIRSF006728">
    <property type="entry name" value="CinA"/>
    <property type="match status" value="1"/>
</dbReference>
<dbReference type="SMART" id="SM00852">
    <property type="entry name" value="MoCF_biosynth"/>
    <property type="match status" value="1"/>
</dbReference>
<dbReference type="SUPFAM" id="SSF142433">
    <property type="entry name" value="CinA-like"/>
    <property type="match status" value="1"/>
</dbReference>
<dbReference type="SUPFAM" id="SSF53218">
    <property type="entry name" value="Molybdenum cofactor biosynthesis proteins"/>
    <property type="match status" value="1"/>
</dbReference>
<accession>Q31RK7</accession>
<protein>
    <recommendedName>
        <fullName evidence="1">CinA-like protein</fullName>
    </recommendedName>
</protein>
<organism>
    <name type="scientific">Synechococcus elongatus (strain ATCC 33912 / PCC 7942 / FACHB-805)</name>
    <name type="common">Anacystis nidulans R2</name>
    <dbReference type="NCBI Taxonomy" id="1140"/>
    <lineage>
        <taxon>Bacteria</taxon>
        <taxon>Bacillati</taxon>
        <taxon>Cyanobacteriota</taxon>
        <taxon>Cyanophyceae</taxon>
        <taxon>Synechococcales</taxon>
        <taxon>Synechococcaceae</taxon>
        <taxon>Synechococcus</taxon>
    </lineage>
</organism>
<reference key="1">
    <citation type="submission" date="2005-08" db="EMBL/GenBank/DDBJ databases">
        <title>Complete sequence of chromosome 1 of Synechococcus elongatus PCC 7942.</title>
        <authorList>
            <consortium name="US DOE Joint Genome Institute"/>
            <person name="Copeland A."/>
            <person name="Lucas S."/>
            <person name="Lapidus A."/>
            <person name="Barry K."/>
            <person name="Detter J.C."/>
            <person name="Glavina T."/>
            <person name="Hammon N."/>
            <person name="Israni S."/>
            <person name="Pitluck S."/>
            <person name="Schmutz J."/>
            <person name="Larimer F."/>
            <person name="Land M."/>
            <person name="Kyrpides N."/>
            <person name="Lykidis A."/>
            <person name="Golden S."/>
            <person name="Richardson P."/>
        </authorList>
    </citation>
    <scope>NUCLEOTIDE SEQUENCE [LARGE SCALE GENOMIC DNA]</scope>
    <source>
        <strain>ATCC 33912 / PCC 7942 / FACHB-805</strain>
    </source>
</reference>
<sequence>MSDPRYCAEIISVGTELLLGNILNSNAQFLAEELAQLGIPHYFQTVVGDNRDRLQSAVKIAAERSGLLIFTGGLGPTPDDLTTETLAACFETPLAERPEVITDIEAKFARRGRVLTDNNRKQALLPVGAELLPNPSGTAPGMIWSPRSGLTLMTFPGVPAEMRRMWTETAVPWLHQNDWCRSILVSRLLRFWGISESALAEKVAPFFDLQNPTVAPYANNGEVKLRITAAAASEAEGVALIAPIEQELRAIAGRDCYGADNDSLASVVGALLHDRGQTLAVAESCTGGGLGQLITTIPGSSQWFWGGAIAYDNRVKQSLLNVSAETLAEAGAVSAVVAEQMAIGIQQRLGTTWGVSITGIAGPDGGTETKPVGLVYIGIAGPTGCFSVERRWGAERGRDWVRRLSAGEALDQLRRSLLNLT</sequence>
<keyword id="KW-1185">Reference proteome</keyword>
<evidence type="ECO:0000255" key="1">
    <source>
        <dbReference type="HAMAP-Rule" id="MF_00226"/>
    </source>
</evidence>
<comment type="similarity">
    <text evidence="1">Belongs to the CinA family.</text>
</comment>
<gene>
    <name type="ordered locus">Synpcc7942_0280</name>
</gene>
<feature type="chain" id="PRO_1000058741" description="CinA-like protein">
    <location>
        <begin position="1"/>
        <end position="421"/>
    </location>
</feature>